<sequence length="918" mass="102453">MTNYSLRARMMILILAPTVLIGLLLSIFFVVHRYNDLQRQLEDAGASIIEPLAVSTEYGMSLQNRESIGQLISVLHRRHSDIVRAISVYDENNRLFVTSNFHLDPSSMQLGSNVPFPRQLTVTRDGDIMILRTPIISESYSPDESPSSDAKNSQNMLGYIALELDLKSVRLQQYKEIFISSVMMLFCIGIALIFGWRLMRDVTGPIRNMVNTVDRIRRGQLDSRVEGFMLGELDMLKNGINSMAMSLAAYHEEMQHNIDQATSDLRETLEQMEIQNVELDLAKKRAQEAARIKSEFLANMSHELRTPLNGVIGFTRLTLKTELTPTQRDHLNTIERSANNLLAIINDVLDFSKLEAGKLILESIPFPLRSTLDEVVTLLAHSSHDKGLELTLNIKSDVPDNVIGDPLRLQQIITNLVGNAIKFTENGNIDILVEKRALSNTKVQIEVQIRDTGIGIPERDQSRLFQAFRQADASISRRHGGTGLGLVITQKLVNEMGGDISFHSQPNRGSTFWFHINLDLNPNIIIEGPSTQCLAGKRLAYVEPNSAAAQCTLDILSETPLEVVYSPTFSALPPAHYDMMLLGIAVTFREPLTMQHERLAKAVSMTDFLMLALPCHAQVNAEKLKQDGIGACLLKPLTPTRLLPALTEFCHHKQNTLLPVTDESKLAMTVMAVDDNPANLKLIGALLEDMVQHVELCDSGHQAVERAKQMPFDLILMDIQMPDMDGIRACELIHQLPHQQQTPVIAVTAHAMAGQKEKLLGAGMSDYLAKPIEEERLHNLLLRYKPGSGISSRVVTPEVNEIVVNPNATLDWQLALRQAAGKTDLARDMLQMLLDFLPEVRNKVEEQLVGENPEGLVDLIHKLHGSCGYSGVPRMKNLCQLIEQQLRSGTKEEDLEPELLELLDEMDNVAREASKILG</sequence>
<feature type="chain" id="PRO_0000074697" description="Signal transduction histidine-protein kinase BarA">
    <location>
        <begin position="1"/>
        <end position="918"/>
    </location>
</feature>
<feature type="topological domain" description="Cytoplasmic" evidence="1">
    <location>
        <begin position="1"/>
        <end position="9"/>
    </location>
</feature>
<feature type="transmembrane region" description="Helical" evidence="1">
    <location>
        <begin position="10"/>
        <end position="31"/>
    </location>
</feature>
<feature type="topological domain" description="Periplasmic" evidence="1">
    <location>
        <begin position="32"/>
        <end position="176"/>
    </location>
</feature>
<feature type="transmembrane region" description="Helical" evidence="1">
    <location>
        <begin position="177"/>
        <end position="196"/>
    </location>
</feature>
<feature type="topological domain" description="Cytoplasmic" evidence="1">
    <location>
        <begin position="197"/>
        <end position="918"/>
    </location>
</feature>
<feature type="domain" description="HAMP" evidence="2">
    <location>
        <begin position="200"/>
        <end position="252"/>
    </location>
</feature>
<feature type="domain" description="Histidine kinase" evidence="3">
    <location>
        <begin position="299"/>
        <end position="520"/>
    </location>
</feature>
<feature type="domain" description="Response regulatory" evidence="5">
    <location>
        <begin position="669"/>
        <end position="785"/>
    </location>
</feature>
<feature type="domain" description="HPt" evidence="4">
    <location>
        <begin position="822"/>
        <end position="918"/>
    </location>
</feature>
<feature type="modified residue" description="Phosphohistidine; by autocatalysis" evidence="3">
    <location>
        <position position="302"/>
    </location>
</feature>
<feature type="modified residue" description="4-aspartylphosphate" evidence="5">
    <location>
        <position position="718"/>
    </location>
</feature>
<feature type="modified residue" description="Phosphohistidine" evidence="4">
    <location>
        <position position="861"/>
    </location>
</feature>
<dbReference type="EC" id="2.7.13.3" evidence="13"/>
<dbReference type="EMBL" id="D10888">
    <property type="protein sequence ID" value="BAA01710.1"/>
    <property type="molecule type" value="Genomic_DNA"/>
</dbReference>
<dbReference type="EMBL" id="U29580">
    <property type="protein sequence ID" value="AAA69296.1"/>
    <property type="molecule type" value="Genomic_DNA"/>
</dbReference>
<dbReference type="EMBL" id="U00096">
    <property type="protein sequence ID" value="AAC75828.1"/>
    <property type="molecule type" value="Genomic_DNA"/>
</dbReference>
<dbReference type="EMBL" id="AP009048">
    <property type="protein sequence ID" value="BAA16571.2"/>
    <property type="molecule type" value="Genomic_DNA"/>
</dbReference>
<dbReference type="PIR" id="S20550">
    <property type="entry name" value="S20550"/>
</dbReference>
<dbReference type="RefSeq" id="NP_417266.1">
    <property type="nucleotide sequence ID" value="NC_000913.3"/>
</dbReference>
<dbReference type="RefSeq" id="WP_000186450.1">
    <property type="nucleotide sequence ID" value="NZ_SSZK01000003.1"/>
</dbReference>
<dbReference type="SMR" id="P0AEC5"/>
<dbReference type="BioGRID" id="4262286">
    <property type="interactions" value="27"/>
</dbReference>
<dbReference type="BioGRID" id="851585">
    <property type="interactions" value="1"/>
</dbReference>
<dbReference type="DIP" id="DIP-47932N"/>
<dbReference type="FunCoup" id="P0AEC5">
    <property type="interactions" value="525"/>
</dbReference>
<dbReference type="IntAct" id="P0AEC5">
    <property type="interactions" value="4"/>
</dbReference>
<dbReference type="STRING" id="511145.b2786"/>
<dbReference type="iPTMnet" id="P0AEC5"/>
<dbReference type="jPOST" id="P0AEC5"/>
<dbReference type="PaxDb" id="511145-b2786"/>
<dbReference type="EnsemblBacteria" id="AAC75828">
    <property type="protein sequence ID" value="AAC75828"/>
    <property type="gene ID" value="b2786"/>
</dbReference>
<dbReference type="GeneID" id="75203823"/>
<dbReference type="GeneID" id="947255"/>
<dbReference type="KEGG" id="ecj:JW2757"/>
<dbReference type="KEGG" id="eco:b2786"/>
<dbReference type="KEGG" id="ecoc:C3026_15320"/>
<dbReference type="PATRIC" id="fig|1411691.4.peg.3949"/>
<dbReference type="EchoBASE" id="EB1341"/>
<dbReference type="eggNOG" id="COG2205">
    <property type="taxonomic scope" value="Bacteria"/>
</dbReference>
<dbReference type="eggNOG" id="COG3437">
    <property type="taxonomic scope" value="Bacteria"/>
</dbReference>
<dbReference type="eggNOG" id="COG3850">
    <property type="taxonomic scope" value="Bacteria"/>
</dbReference>
<dbReference type="eggNOG" id="COG4999">
    <property type="taxonomic scope" value="Bacteria"/>
</dbReference>
<dbReference type="HOGENOM" id="CLU_000445_104_1_6"/>
<dbReference type="InParanoid" id="P0AEC5"/>
<dbReference type="OMA" id="NDATRYL"/>
<dbReference type="OrthoDB" id="9770795at2"/>
<dbReference type="PhylomeDB" id="P0AEC5"/>
<dbReference type="BioCyc" id="EcoCyc:BARA-MONOMER"/>
<dbReference type="BioCyc" id="MetaCyc:BARA-MONOMER"/>
<dbReference type="PRO" id="PR:P0AEC5"/>
<dbReference type="Proteomes" id="UP000000625">
    <property type="component" value="Chromosome"/>
</dbReference>
<dbReference type="GO" id="GO:0005886">
    <property type="term" value="C:plasma membrane"/>
    <property type="evidence" value="ECO:0000314"/>
    <property type="project" value="EcoCyc"/>
</dbReference>
<dbReference type="GO" id="GO:0005524">
    <property type="term" value="F:ATP binding"/>
    <property type="evidence" value="ECO:0007669"/>
    <property type="project" value="UniProtKB-KW"/>
</dbReference>
<dbReference type="GO" id="GO:0009927">
    <property type="term" value="F:histidine phosphotransfer kinase activity"/>
    <property type="evidence" value="ECO:0000314"/>
    <property type="project" value="EcoliWiki"/>
</dbReference>
<dbReference type="GO" id="GO:0004721">
    <property type="term" value="F:phosphoprotein phosphatase activity"/>
    <property type="evidence" value="ECO:0000314"/>
    <property type="project" value="EcoCyc"/>
</dbReference>
<dbReference type="GO" id="GO:0000155">
    <property type="term" value="F:phosphorelay sensor kinase activity"/>
    <property type="evidence" value="ECO:0000314"/>
    <property type="project" value="EcoCyc"/>
</dbReference>
<dbReference type="GO" id="GO:0004673">
    <property type="term" value="F:protein histidine kinase activity"/>
    <property type="evidence" value="ECO:0000314"/>
    <property type="project" value="EcoCyc"/>
</dbReference>
<dbReference type="GO" id="GO:0042803">
    <property type="term" value="F:protein homodimerization activity"/>
    <property type="evidence" value="ECO:0000314"/>
    <property type="project" value="EcoCyc"/>
</dbReference>
<dbReference type="GO" id="GO:0010034">
    <property type="term" value="P:response to acetate"/>
    <property type="evidence" value="ECO:0000270"/>
    <property type="project" value="EcoCyc"/>
</dbReference>
<dbReference type="GO" id="GO:1901425">
    <property type="term" value="P:response to formic acid"/>
    <property type="evidence" value="ECO:0000270"/>
    <property type="project" value="EcoCyc"/>
</dbReference>
<dbReference type="GO" id="GO:0042542">
    <property type="term" value="P:response to hydrogen peroxide"/>
    <property type="evidence" value="ECO:0000315"/>
    <property type="project" value="EcoCyc"/>
</dbReference>
<dbReference type="GO" id="GO:0007165">
    <property type="term" value="P:signal transduction"/>
    <property type="evidence" value="ECO:0000269"/>
    <property type="project" value="EcoCyc"/>
</dbReference>
<dbReference type="CDD" id="cd06225">
    <property type="entry name" value="HAMP"/>
    <property type="match status" value="1"/>
</dbReference>
<dbReference type="CDD" id="cd16922">
    <property type="entry name" value="HATPase_EvgS-ArcB-TorS-like"/>
    <property type="match status" value="1"/>
</dbReference>
<dbReference type="CDD" id="cd00082">
    <property type="entry name" value="HisKA"/>
    <property type="match status" value="1"/>
</dbReference>
<dbReference type="CDD" id="cd00088">
    <property type="entry name" value="HPT"/>
    <property type="match status" value="1"/>
</dbReference>
<dbReference type="CDD" id="cd17546">
    <property type="entry name" value="REC_hyHK_CKI1_RcsC-like"/>
    <property type="match status" value="1"/>
</dbReference>
<dbReference type="FunFam" id="1.10.287.130:FF:000003">
    <property type="entry name" value="Histidine kinase"/>
    <property type="match status" value="1"/>
</dbReference>
<dbReference type="FunFam" id="1.20.120.160:FF:000002">
    <property type="entry name" value="Histidine kinase"/>
    <property type="match status" value="1"/>
</dbReference>
<dbReference type="FunFam" id="3.30.565.10:FF:000020">
    <property type="entry name" value="Histidine kinase"/>
    <property type="match status" value="1"/>
</dbReference>
<dbReference type="FunFam" id="3.40.50.2300:FF:000109">
    <property type="entry name" value="Histidine kinase"/>
    <property type="match status" value="1"/>
</dbReference>
<dbReference type="Gene3D" id="1.10.287.130">
    <property type="match status" value="1"/>
</dbReference>
<dbReference type="Gene3D" id="3.40.50.2300">
    <property type="match status" value="1"/>
</dbReference>
<dbReference type="Gene3D" id="6.10.340.10">
    <property type="match status" value="1"/>
</dbReference>
<dbReference type="Gene3D" id="3.30.565.10">
    <property type="entry name" value="Histidine kinase-like ATPase, C-terminal domain"/>
    <property type="match status" value="1"/>
</dbReference>
<dbReference type="Gene3D" id="1.20.120.160">
    <property type="entry name" value="HPT domain"/>
    <property type="match status" value="1"/>
</dbReference>
<dbReference type="InterPro" id="IPR011006">
    <property type="entry name" value="CheY-like_superfamily"/>
</dbReference>
<dbReference type="InterPro" id="IPR003660">
    <property type="entry name" value="HAMP_dom"/>
</dbReference>
<dbReference type="InterPro" id="IPR036890">
    <property type="entry name" value="HATPase_C_sf"/>
</dbReference>
<dbReference type="InterPro" id="IPR005467">
    <property type="entry name" value="His_kinase_dom"/>
</dbReference>
<dbReference type="InterPro" id="IPR003661">
    <property type="entry name" value="HisK_dim/P_dom"/>
</dbReference>
<dbReference type="InterPro" id="IPR036097">
    <property type="entry name" value="HisK_dim/P_sf"/>
</dbReference>
<dbReference type="InterPro" id="IPR019247">
    <property type="entry name" value="Histidine_kinase_BarA_N"/>
</dbReference>
<dbReference type="InterPro" id="IPR036641">
    <property type="entry name" value="HPT_dom_sf"/>
</dbReference>
<dbReference type="InterPro" id="IPR004358">
    <property type="entry name" value="Sig_transdc_His_kin-like_C"/>
</dbReference>
<dbReference type="InterPro" id="IPR008207">
    <property type="entry name" value="Sig_transdc_His_kin_Hpt_dom"/>
</dbReference>
<dbReference type="InterPro" id="IPR001789">
    <property type="entry name" value="Sig_transdc_resp-reg_receiver"/>
</dbReference>
<dbReference type="NCBIfam" id="NF008318">
    <property type="entry name" value="PRK11107.1"/>
    <property type="match status" value="1"/>
</dbReference>
<dbReference type="PANTHER" id="PTHR45339">
    <property type="entry name" value="HYBRID SIGNAL TRANSDUCTION HISTIDINE KINASE J"/>
    <property type="match status" value="1"/>
</dbReference>
<dbReference type="PANTHER" id="PTHR45339:SF1">
    <property type="entry name" value="HYBRID SIGNAL TRANSDUCTION HISTIDINE KINASE J"/>
    <property type="match status" value="1"/>
</dbReference>
<dbReference type="Pfam" id="PF00672">
    <property type="entry name" value="HAMP"/>
    <property type="match status" value="1"/>
</dbReference>
<dbReference type="Pfam" id="PF02518">
    <property type="entry name" value="HATPase_c"/>
    <property type="match status" value="1"/>
</dbReference>
<dbReference type="Pfam" id="PF00512">
    <property type="entry name" value="HisKA"/>
    <property type="match status" value="1"/>
</dbReference>
<dbReference type="Pfam" id="PF01627">
    <property type="entry name" value="Hpt"/>
    <property type="match status" value="1"/>
</dbReference>
<dbReference type="Pfam" id="PF00072">
    <property type="entry name" value="Response_reg"/>
    <property type="match status" value="1"/>
</dbReference>
<dbReference type="Pfam" id="PF09984">
    <property type="entry name" value="sCache_4"/>
    <property type="match status" value="1"/>
</dbReference>
<dbReference type="PRINTS" id="PR00344">
    <property type="entry name" value="BCTRLSENSOR"/>
</dbReference>
<dbReference type="SMART" id="SM00304">
    <property type="entry name" value="HAMP"/>
    <property type="match status" value="1"/>
</dbReference>
<dbReference type="SMART" id="SM00387">
    <property type="entry name" value="HATPase_c"/>
    <property type="match status" value="1"/>
</dbReference>
<dbReference type="SMART" id="SM00388">
    <property type="entry name" value="HisKA"/>
    <property type="match status" value="1"/>
</dbReference>
<dbReference type="SMART" id="SM00073">
    <property type="entry name" value="HPT"/>
    <property type="match status" value="1"/>
</dbReference>
<dbReference type="SMART" id="SM00448">
    <property type="entry name" value="REC"/>
    <property type="match status" value="1"/>
</dbReference>
<dbReference type="SUPFAM" id="SSF55874">
    <property type="entry name" value="ATPase domain of HSP90 chaperone/DNA topoisomerase II/histidine kinase"/>
    <property type="match status" value="1"/>
</dbReference>
<dbReference type="SUPFAM" id="SSF52172">
    <property type="entry name" value="CheY-like"/>
    <property type="match status" value="1"/>
</dbReference>
<dbReference type="SUPFAM" id="SSF158472">
    <property type="entry name" value="HAMP domain-like"/>
    <property type="match status" value="1"/>
</dbReference>
<dbReference type="SUPFAM" id="SSF47226">
    <property type="entry name" value="Histidine-containing phosphotransfer domain, HPT domain"/>
    <property type="match status" value="1"/>
</dbReference>
<dbReference type="SUPFAM" id="SSF47384">
    <property type="entry name" value="Homodimeric domain of signal transducing histidine kinase"/>
    <property type="match status" value="1"/>
</dbReference>
<dbReference type="PROSITE" id="PS50885">
    <property type="entry name" value="HAMP"/>
    <property type="match status" value="1"/>
</dbReference>
<dbReference type="PROSITE" id="PS50109">
    <property type="entry name" value="HIS_KIN"/>
    <property type="match status" value="1"/>
</dbReference>
<dbReference type="PROSITE" id="PS50894">
    <property type="entry name" value="HPT"/>
    <property type="match status" value="1"/>
</dbReference>
<dbReference type="PROSITE" id="PS50110">
    <property type="entry name" value="RESPONSE_REGULATORY"/>
    <property type="match status" value="1"/>
</dbReference>
<accession>P0AEC5</accession>
<accession>P26607</accession>
<accession>P77032</accession>
<keyword id="KW-0067">ATP-binding</keyword>
<keyword id="KW-0997">Cell inner membrane</keyword>
<keyword id="KW-1003">Cell membrane</keyword>
<keyword id="KW-0418">Kinase</keyword>
<keyword id="KW-0472">Membrane</keyword>
<keyword id="KW-0547">Nucleotide-binding</keyword>
<keyword id="KW-0597">Phosphoprotein</keyword>
<keyword id="KW-1185">Reference proteome</keyword>
<keyword id="KW-0804">Transcription</keyword>
<keyword id="KW-0805">Transcription regulation</keyword>
<keyword id="KW-0808">Transferase</keyword>
<keyword id="KW-0812">Transmembrane</keyword>
<keyword id="KW-1133">Transmembrane helix</keyword>
<keyword id="KW-0902">Two-component regulatory system</keyword>
<evidence type="ECO:0000255" key="1"/>
<evidence type="ECO:0000255" key="2">
    <source>
        <dbReference type="PROSITE-ProRule" id="PRU00102"/>
    </source>
</evidence>
<evidence type="ECO:0000255" key="3">
    <source>
        <dbReference type="PROSITE-ProRule" id="PRU00107"/>
    </source>
</evidence>
<evidence type="ECO:0000255" key="4">
    <source>
        <dbReference type="PROSITE-ProRule" id="PRU00110"/>
    </source>
</evidence>
<evidence type="ECO:0000255" key="5">
    <source>
        <dbReference type="PROSITE-ProRule" id="PRU00169"/>
    </source>
</evidence>
<evidence type="ECO:0000269" key="6">
    <source>
    </source>
</evidence>
<evidence type="ECO:0000269" key="7">
    <source>
    </source>
</evidence>
<evidence type="ECO:0000269" key="8">
    <source>
    </source>
</evidence>
<evidence type="ECO:0000269" key="9">
    <source>
    </source>
</evidence>
<evidence type="ECO:0000269" key="10">
    <source>
    </source>
</evidence>
<evidence type="ECO:0000303" key="11">
    <source>
    </source>
</evidence>
<evidence type="ECO:0000305" key="12"/>
<evidence type="ECO:0000305" key="13">
    <source>
    </source>
</evidence>
<reference key="1">
    <citation type="journal article" date="1992" name="Mol. Microbiol.">
        <title>A novel sensor-regulator protein that belongs to the homologous family of signal-transduction proteins involved in adaptive responses in Escherichia coli.</title>
        <authorList>
            <person name="Nagasawa S."/>
            <person name="Tokishita S."/>
            <person name="Aiba H."/>
            <person name="Mizuno T."/>
        </authorList>
    </citation>
    <scope>NUCLEOTIDE SEQUENCE [GENOMIC DNA]</scope>
    <scope>AUTOPHOSPHORYLATION</scope>
    <source>
        <strain>K12</strain>
    </source>
</reference>
<reference key="2">
    <citation type="journal article" date="1997" name="Science">
        <title>The complete genome sequence of Escherichia coli K-12.</title>
        <authorList>
            <person name="Blattner F.R."/>
            <person name="Plunkett G. III"/>
            <person name="Bloch C.A."/>
            <person name="Perna N.T."/>
            <person name="Burland V."/>
            <person name="Riley M."/>
            <person name="Collado-Vides J."/>
            <person name="Glasner J.D."/>
            <person name="Rode C.K."/>
            <person name="Mayhew G.F."/>
            <person name="Gregor J."/>
            <person name="Davis N.W."/>
            <person name="Kirkpatrick H.A."/>
            <person name="Goeden M.A."/>
            <person name="Rose D.J."/>
            <person name="Mau B."/>
            <person name="Shao Y."/>
        </authorList>
    </citation>
    <scope>NUCLEOTIDE SEQUENCE [LARGE SCALE GENOMIC DNA]</scope>
    <source>
        <strain>K12 / MG1655 / ATCC 47076</strain>
    </source>
</reference>
<reference key="3">
    <citation type="journal article" date="2006" name="Mol. Syst. Biol.">
        <title>Highly accurate genome sequences of Escherichia coli K-12 strains MG1655 and W3110.</title>
        <authorList>
            <person name="Hayashi K."/>
            <person name="Morooka N."/>
            <person name="Yamamoto Y."/>
            <person name="Fujita K."/>
            <person name="Isono K."/>
            <person name="Choi S."/>
            <person name="Ohtsubo E."/>
            <person name="Baba T."/>
            <person name="Wanner B.L."/>
            <person name="Mori H."/>
            <person name="Horiuchi T."/>
        </authorList>
    </citation>
    <scope>NUCLEOTIDE SEQUENCE [LARGE SCALE GENOMIC DNA]</scope>
    <source>
        <strain>K12 / W3110 / ATCC 27325 / DSM 5911</strain>
    </source>
</reference>
<reference key="4">
    <citation type="journal article" date="1997" name="DNA Res.">
        <title>Construction of a contiguous 874-kb sequence of the Escherichia coli-K12 genome corresponding to 50.0-68.8 min on the linkage map and analysis of its sequence features.</title>
        <authorList>
            <person name="Yamamoto Y."/>
            <person name="Aiba H."/>
            <person name="Baba T."/>
            <person name="Hayashi K."/>
            <person name="Inada T."/>
            <person name="Isono K."/>
            <person name="Itoh T."/>
            <person name="Kimura S."/>
            <person name="Kitagawa M."/>
            <person name="Makino K."/>
            <person name="Miki T."/>
            <person name="Mitsuhashi N."/>
            <person name="Mizobuchi K."/>
            <person name="Mori H."/>
            <person name="Nakade S."/>
            <person name="Nakamura Y."/>
            <person name="Nashimoto H."/>
            <person name="Oshima T."/>
            <person name="Oyama S."/>
            <person name="Saito N."/>
            <person name="Sampei G."/>
            <person name="Satoh Y."/>
            <person name="Sivasundaram S."/>
            <person name="Tagami H."/>
            <person name="Takahashi H."/>
            <person name="Takeda J."/>
            <person name="Takemoto K."/>
            <person name="Uehara K."/>
            <person name="Wada C."/>
            <person name="Yamagata S."/>
            <person name="Horiuchi T."/>
        </authorList>
    </citation>
    <scope>NUCLEOTIDE SEQUENCE [LARGE SCALE GENOMIC DNA] OF 106-918</scope>
    <source>
        <strain>K12 / W3110 / ATCC 27325 / DSM 5911</strain>
    </source>
</reference>
<reference key="5">
    <citation type="journal article" date="2001" name="J. Biol. Chem.">
        <title>Identification of UvrY as the cognate response regulator for the BarA sensor kinase in Escherichia coli.</title>
        <authorList>
            <person name="Pernestig A.-K."/>
            <person name="Melefors O."/>
            <person name="Georgellis D."/>
        </authorList>
    </citation>
    <scope>FUNCTION</scope>
    <scope>CATALYTIC ACTIVITY</scope>
    <scope>AUTOPHOSPHORYLATION</scope>
    <scope>DISRUPTION PHENOTYPE</scope>
    <source>
        <strain>K12 / MC4100 / ATCC 35695 / DSM 6574</strain>
    </source>
</reference>
<reference key="6">
    <citation type="journal article" date="2002" name="J. Bacteriol.">
        <title>Regulatory circuitry of the CsrA/CsrB and BarA/UvrY systems of Escherichia coli.</title>
        <authorList>
            <person name="Suzuki K."/>
            <person name="Wang X."/>
            <person name="Weilbacher T."/>
            <person name="Pernestig A.-K."/>
            <person name="Melefors O."/>
            <person name="Georgellis D."/>
            <person name="Babitzke P."/>
            <person name="Romeo T."/>
        </authorList>
    </citation>
    <scope>FUNCTION</scope>
    <source>
        <strain>K12 / MC4100 / ATCC 35695 / DSM 6574</strain>
    </source>
</reference>
<reference key="7">
    <citation type="journal article" date="2003" name="J. Bacteriol.">
        <title>The Escherichia coli BarA-UvrY two-component system is needed for efficient switching between glycolytic and gluconeogenic carbon sources.</title>
        <authorList>
            <person name="Pernestig A.-K."/>
            <person name="Georgellis D."/>
            <person name="Romeo T."/>
            <person name="Suzuki K."/>
            <person name="Tomenius H."/>
            <person name="Normark S."/>
            <person name="Melefors O."/>
        </authorList>
    </citation>
    <scope>FUNCTION</scope>
</reference>
<reference key="8">
    <citation type="journal article" date="2005" name="Science">
        <title>Global topology analysis of the Escherichia coli inner membrane proteome.</title>
        <authorList>
            <person name="Daley D.O."/>
            <person name="Rapp M."/>
            <person name="Granseth E."/>
            <person name="Melen K."/>
            <person name="Drew D."/>
            <person name="von Heijne G."/>
        </authorList>
    </citation>
    <scope>SUBCELLULAR LOCATION</scope>
    <source>
        <strain>K12 / MG1655 / ATCC 47076</strain>
    </source>
</reference>
<gene>
    <name evidence="11" type="primary">barA</name>
    <name type="ordered locus">b2786</name>
    <name type="ordered locus">JW2757</name>
</gene>
<comment type="function">
    <text evidence="6 7 8">Member of the two-component regulatory system UvrY/BarA involved in the regulation of carbon metabolism via the CsrA/CsrB regulatory system (PubMed:12193630, PubMed:12533459). Phosphorylates UvrY, probably via a four-step phosphorelay (PubMed:11022030).</text>
</comment>
<comment type="catalytic activity">
    <reaction evidence="13">
        <text>ATP + protein L-histidine = ADP + protein N-phospho-L-histidine.</text>
        <dbReference type="EC" id="2.7.13.3"/>
    </reaction>
</comment>
<comment type="interaction">
    <interactant intactId="EBI-546740">
        <id>P0AEC5</id>
    </interactant>
    <interactant intactId="EBI-546140">
        <id>P0ABH9</id>
        <label>clpA</label>
    </interactant>
    <organismsDiffer>false</organismsDiffer>
    <experiments>3</experiments>
</comment>
<comment type="subcellular location">
    <subcellularLocation>
        <location evidence="10">Cell inner membrane</location>
        <topology evidence="1">Multi-pass membrane protein</topology>
    </subcellularLocation>
</comment>
<comment type="PTM">
    <text evidence="6 9 12">Autophosphorylated (PubMed:11022030, PubMed:1574005). Activation requires a sequential transfer of a phosphate group from a His in the primary transmitter domain, to an Asp in the receiver domain and to a His in the secondary transmitter domain (Probable).</text>
</comment>
<comment type="disruption phenotype">
    <text evidence="6">Inactivation of the gene leads to hydrogen peroxide hypersensitivity.</text>
</comment>
<name>BARA_ECOLI</name>
<proteinExistence type="evidence at protein level"/>
<organism>
    <name type="scientific">Escherichia coli (strain K12)</name>
    <dbReference type="NCBI Taxonomy" id="83333"/>
    <lineage>
        <taxon>Bacteria</taxon>
        <taxon>Pseudomonadati</taxon>
        <taxon>Pseudomonadota</taxon>
        <taxon>Gammaproteobacteria</taxon>
        <taxon>Enterobacterales</taxon>
        <taxon>Enterobacteriaceae</taxon>
        <taxon>Escherichia</taxon>
    </lineage>
</organism>
<protein>
    <recommendedName>
        <fullName>Signal transduction histidine-protein kinase BarA</fullName>
        <ecNumber evidence="13">2.7.13.3</ecNumber>
    </recommendedName>
</protein>